<proteinExistence type="inferred from homology"/>
<gene>
    <name type="primary">cysE</name>
    <name type="ordered locus">SAR0532</name>
</gene>
<keyword id="KW-0012">Acyltransferase</keyword>
<keyword id="KW-0028">Amino-acid biosynthesis</keyword>
<keyword id="KW-0198">Cysteine biosynthesis</keyword>
<keyword id="KW-0963">Cytoplasm</keyword>
<keyword id="KW-0677">Repeat</keyword>
<keyword id="KW-0808">Transferase</keyword>
<feature type="chain" id="PRO_0000068680" description="Serine acetyltransferase">
    <location>
        <begin position="1"/>
        <end position="215"/>
    </location>
</feature>
<accession>Q6GJE0</accession>
<evidence type="ECO:0000305" key="1"/>
<organism>
    <name type="scientific">Staphylococcus aureus (strain MRSA252)</name>
    <dbReference type="NCBI Taxonomy" id="282458"/>
    <lineage>
        <taxon>Bacteria</taxon>
        <taxon>Bacillati</taxon>
        <taxon>Bacillota</taxon>
        <taxon>Bacilli</taxon>
        <taxon>Bacillales</taxon>
        <taxon>Staphylococcaceae</taxon>
        <taxon>Staphylococcus</taxon>
    </lineage>
</organism>
<dbReference type="EC" id="2.3.1.30"/>
<dbReference type="EMBL" id="BX571856">
    <property type="protein sequence ID" value="CAG39554.1"/>
    <property type="molecule type" value="Genomic_DNA"/>
</dbReference>
<dbReference type="RefSeq" id="WP_001805237.1">
    <property type="nucleotide sequence ID" value="NC_002952.2"/>
</dbReference>
<dbReference type="SMR" id="Q6GJE0"/>
<dbReference type="KEGG" id="sar:SAR0532"/>
<dbReference type="HOGENOM" id="CLU_051638_10_0_9"/>
<dbReference type="UniPathway" id="UPA00136">
    <property type="reaction ID" value="UER00199"/>
</dbReference>
<dbReference type="Proteomes" id="UP000000596">
    <property type="component" value="Chromosome"/>
</dbReference>
<dbReference type="GO" id="GO:0005737">
    <property type="term" value="C:cytoplasm"/>
    <property type="evidence" value="ECO:0007669"/>
    <property type="project" value="UniProtKB-SubCell"/>
</dbReference>
<dbReference type="GO" id="GO:0009001">
    <property type="term" value="F:serine O-acetyltransferase activity"/>
    <property type="evidence" value="ECO:0007669"/>
    <property type="project" value="UniProtKB-EC"/>
</dbReference>
<dbReference type="GO" id="GO:0006535">
    <property type="term" value="P:cysteine biosynthetic process from serine"/>
    <property type="evidence" value="ECO:0007669"/>
    <property type="project" value="InterPro"/>
</dbReference>
<dbReference type="CDD" id="cd03354">
    <property type="entry name" value="LbH_SAT"/>
    <property type="match status" value="1"/>
</dbReference>
<dbReference type="FunFam" id="1.10.3130.10:FF:000002">
    <property type="entry name" value="Serine acetyltransferase"/>
    <property type="match status" value="1"/>
</dbReference>
<dbReference type="FunFam" id="2.160.10.10:FF:000007">
    <property type="entry name" value="Serine acetyltransferase"/>
    <property type="match status" value="1"/>
</dbReference>
<dbReference type="Gene3D" id="2.160.10.10">
    <property type="entry name" value="Hexapeptide repeat proteins"/>
    <property type="match status" value="1"/>
</dbReference>
<dbReference type="Gene3D" id="1.10.3130.10">
    <property type="entry name" value="serine acetyltransferase, domain 1"/>
    <property type="match status" value="1"/>
</dbReference>
<dbReference type="InterPro" id="IPR001451">
    <property type="entry name" value="Hexapep"/>
</dbReference>
<dbReference type="InterPro" id="IPR045304">
    <property type="entry name" value="LbH_SAT"/>
</dbReference>
<dbReference type="InterPro" id="IPR042122">
    <property type="entry name" value="Ser_AcTrfase_N_sf"/>
</dbReference>
<dbReference type="InterPro" id="IPR005881">
    <property type="entry name" value="Ser_O-AcTrfase"/>
</dbReference>
<dbReference type="InterPro" id="IPR053376">
    <property type="entry name" value="Serine_acetyltransferase"/>
</dbReference>
<dbReference type="InterPro" id="IPR011004">
    <property type="entry name" value="Trimer_LpxA-like_sf"/>
</dbReference>
<dbReference type="NCBIfam" id="TIGR01172">
    <property type="entry name" value="cysE"/>
    <property type="match status" value="1"/>
</dbReference>
<dbReference type="NCBIfam" id="NF041874">
    <property type="entry name" value="EPS_EpsC"/>
    <property type="match status" value="1"/>
</dbReference>
<dbReference type="PANTHER" id="PTHR42811">
    <property type="entry name" value="SERINE ACETYLTRANSFERASE"/>
    <property type="match status" value="1"/>
</dbReference>
<dbReference type="Pfam" id="PF00132">
    <property type="entry name" value="Hexapep"/>
    <property type="match status" value="1"/>
</dbReference>
<dbReference type="PIRSF" id="PIRSF000441">
    <property type="entry name" value="CysE"/>
    <property type="match status" value="1"/>
</dbReference>
<dbReference type="SUPFAM" id="SSF51161">
    <property type="entry name" value="Trimeric LpxA-like enzymes"/>
    <property type="match status" value="1"/>
</dbReference>
<comment type="catalytic activity">
    <reaction>
        <text>L-serine + acetyl-CoA = O-acetyl-L-serine + CoA</text>
        <dbReference type="Rhea" id="RHEA:24560"/>
        <dbReference type="ChEBI" id="CHEBI:33384"/>
        <dbReference type="ChEBI" id="CHEBI:57287"/>
        <dbReference type="ChEBI" id="CHEBI:57288"/>
        <dbReference type="ChEBI" id="CHEBI:58340"/>
        <dbReference type="EC" id="2.3.1.30"/>
    </reaction>
</comment>
<comment type="pathway">
    <text>Amino-acid biosynthesis; L-cysteine biosynthesis; L-cysteine from L-serine: step 1/2.</text>
</comment>
<comment type="subcellular location">
    <subcellularLocation>
        <location>Cytoplasm</location>
    </subcellularLocation>
</comment>
<comment type="similarity">
    <text evidence="1">Belongs to the transferase hexapeptide repeat family.</text>
</comment>
<protein>
    <recommendedName>
        <fullName>Serine acetyltransferase</fullName>
        <shortName>SAT</shortName>
        <ecNumber>2.3.1.30</ecNumber>
    </recommendedName>
</protein>
<name>CYSE_STAAR</name>
<reference key="1">
    <citation type="journal article" date="2004" name="Proc. Natl. Acad. Sci. U.S.A.">
        <title>Complete genomes of two clinical Staphylococcus aureus strains: evidence for the rapid evolution of virulence and drug resistance.</title>
        <authorList>
            <person name="Holden M.T.G."/>
            <person name="Feil E.J."/>
            <person name="Lindsay J.A."/>
            <person name="Peacock S.J."/>
            <person name="Day N.P.J."/>
            <person name="Enright M.C."/>
            <person name="Foster T.J."/>
            <person name="Moore C.E."/>
            <person name="Hurst L."/>
            <person name="Atkin R."/>
            <person name="Barron A."/>
            <person name="Bason N."/>
            <person name="Bentley S.D."/>
            <person name="Chillingworth C."/>
            <person name="Chillingworth T."/>
            <person name="Churcher C."/>
            <person name="Clark L."/>
            <person name="Corton C."/>
            <person name="Cronin A."/>
            <person name="Doggett J."/>
            <person name="Dowd L."/>
            <person name="Feltwell T."/>
            <person name="Hance Z."/>
            <person name="Harris B."/>
            <person name="Hauser H."/>
            <person name="Holroyd S."/>
            <person name="Jagels K."/>
            <person name="James K.D."/>
            <person name="Lennard N."/>
            <person name="Line A."/>
            <person name="Mayes R."/>
            <person name="Moule S."/>
            <person name="Mungall K."/>
            <person name="Ormond D."/>
            <person name="Quail M.A."/>
            <person name="Rabbinowitsch E."/>
            <person name="Rutherford K.M."/>
            <person name="Sanders M."/>
            <person name="Sharp S."/>
            <person name="Simmonds M."/>
            <person name="Stevens K."/>
            <person name="Whitehead S."/>
            <person name="Barrell B.G."/>
            <person name="Spratt B.G."/>
            <person name="Parkhill J."/>
        </authorList>
    </citation>
    <scope>NUCLEOTIDE SEQUENCE [LARGE SCALE GENOMIC DNA]</scope>
    <source>
        <strain>MRSA252</strain>
    </source>
</reference>
<sequence>MILLKRMRDDIKMVFEQDPAARSTLEVITTYAGLHAVWSHLIAHKLYNQKKYVAARAISQISRFFTGIEIHPGAKIGKRLFIDHGMGVVIGETCTIGDNVTIYQGVTLGGTGKERGKRHPDIGDNVLIAAGAKVLGNIKINSNVNIGANSVVLQSVPSYSTVVGIPGHIVKQDGVRVGKTFDHRHLPDPIYEQIKHLERQLEKTRNGEIQDDYII</sequence>